<dbReference type="EMBL" id="AE005174">
    <property type="protein sequence ID" value="AAG56941.1"/>
    <property type="molecule type" value="Genomic_DNA"/>
</dbReference>
<dbReference type="EMBL" id="BA000007">
    <property type="protein sequence ID" value="BAB36088.1"/>
    <property type="molecule type" value="Genomic_DNA"/>
</dbReference>
<dbReference type="PIR" id="A85810">
    <property type="entry name" value="A85810"/>
</dbReference>
<dbReference type="PIR" id="A90962">
    <property type="entry name" value="A90962"/>
</dbReference>
<dbReference type="RefSeq" id="NP_310692.1">
    <property type="nucleotide sequence ID" value="NC_002695.1"/>
</dbReference>
<dbReference type="RefSeq" id="WP_001015033.1">
    <property type="nucleotide sequence ID" value="NZ_VOAI01000028.1"/>
</dbReference>
<dbReference type="SMR" id="P0ABY3"/>
<dbReference type="STRING" id="155864.Z3016"/>
<dbReference type="GeneID" id="75172048"/>
<dbReference type="GeneID" id="912872"/>
<dbReference type="KEGG" id="ece:Z3016"/>
<dbReference type="KEGG" id="ecs:ECs_2665"/>
<dbReference type="PATRIC" id="fig|386585.9.peg.2793"/>
<dbReference type="eggNOG" id="ENOG5032ZV7">
    <property type="taxonomic scope" value="Bacteria"/>
</dbReference>
<dbReference type="HOGENOM" id="CLU_155793_1_1_6"/>
<dbReference type="OMA" id="DMEITYL"/>
<dbReference type="Proteomes" id="UP000000558">
    <property type="component" value="Chromosome"/>
</dbReference>
<dbReference type="Proteomes" id="UP000002519">
    <property type="component" value="Chromosome"/>
</dbReference>
<dbReference type="GO" id="GO:0005829">
    <property type="term" value="C:cytosol"/>
    <property type="evidence" value="ECO:0007669"/>
    <property type="project" value="UniProtKB-SubCell"/>
</dbReference>
<dbReference type="GO" id="GO:0044781">
    <property type="term" value="P:bacterial-type flagellum organization"/>
    <property type="evidence" value="ECO:0007669"/>
    <property type="project" value="UniProtKB-KW"/>
</dbReference>
<dbReference type="GO" id="GO:1902209">
    <property type="term" value="P:negative regulation of bacterial-type flagellum assembly"/>
    <property type="evidence" value="ECO:0007669"/>
    <property type="project" value="UniProtKB-UniRule"/>
</dbReference>
<dbReference type="GO" id="GO:0006457">
    <property type="term" value="P:protein folding"/>
    <property type="evidence" value="ECO:0007669"/>
    <property type="project" value="UniProtKB-UniRule"/>
</dbReference>
<dbReference type="FunFam" id="1.20.58.380:FF:000001">
    <property type="entry name" value="Flagellar protein FliT"/>
    <property type="match status" value="1"/>
</dbReference>
<dbReference type="Gene3D" id="1.20.58.380">
    <property type="entry name" value="Flagellar protein flit"/>
    <property type="match status" value="1"/>
</dbReference>
<dbReference type="HAMAP" id="MF_01180">
    <property type="entry name" value="FliT"/>
    <property type="match status" value="1"/>
</dbReference>
<dbReference type="InterPro" id="IPR008622">
    <property type="entry name" value="FliT"/>
</dbReference>
<dbReference type="NCBIfam" id="NF007836">
    <property type="entry name" value="PRK10548.1"/>
    <property type="match status" value="1"/>
</dbReference>
<dbReference type="Pfam" id="PF05400">
    <property type="entry name" value="FliT"/>
    <property type="match status" value="1"/>
</dbReference>
<gene>
    <name evidence="1" type="primary">fliT</name>
    <name type="ordered locus">Z3016</name>
    <name type="ordered locus">ECs2665</name>
</gene>
<organism>
    <name type="scientific">Escherichia coli O157:H7</name>
    <dbReference type="NCBI Taxonomy" id="83334"/>
    <lineage>
        <taxon>Bacteria</taxon>
        <taxon>Pseudomonadati</taxon>
        <taxon>Pseudomonadota</taxon>
        <taxon>Gammaproteobacteria</taxon>
        <taxon>Enterobacterales</taxon>
        <taxon>Enterobacteriaceae</taxon>
        <taxon>Escherichia</taxon>
    </lineage>
</organism>
<reference key="1">
    <citation type="journal article" date="2001" name="Nature">
        <title>Genome sequence of enterohaemorrhagic Escherichia coli O157:H7.</title>
        <authorList>
            <person name="Perna N.T."/>
            <person name="Plunkett G. III"/>
            <person name="Burland V."/>
            <person name="Mau B."/>
            <person name="Glasner J.D."/>
            <person name="Rose D.J."/>
            <person name="Mayhew G.F."/>
            <person name="Evans P.S."/>
            <person name="Gregor J."/>
            <person name="Kirkpatrick H.A."/>
            <person name="Posfai G."/>
            <person name="Hackett J."/>
            <person name="Klink S."/>
            <person name="Boutin A."/>
            <person name="Shao Y."/>
            <person name="Miller L."/>
            <person name="Grotbeck E.J."/>
            <person name="Davis N.W."/>
            <person name="Lim A."/>
            <person name="Dimalanta E.T."/>
            <person name="Potamousis K."/>
            <person name="Apodaca J."/>
            <person name="Anantharaman T.S."/>
            <person name="Lin J."/>
            <person name="Yen G."/>
            <person name="Schwartz D.C."/>
            <person name="Welch R.A."/>
            <person name="Blattner F.R."/>
        </authorList>
    </citation>
    <scope>NUCLEOTIDE SEQUENCE [LARGE SCALE GENOMIC DNA]</scope>
    <source>
        <strain>O157:H7 / EDL933 / ATCC 700927 / EHEC</strain>
    </source>
</reference>
<reference key="2">
    <citation type="journal article" date="2001" name="DNA Res.">
        <title>Complete genome sequence of enterohemorrhagic Escherichia coli O157:H7 and genomic comparison with a laboratory strain K-12.</title>
        <authorList>
            <person name="Hayashi T."/>
            <person name="Makino K."/>
            <person name="Ohnishi M."/>
            <person name="Kurokawa K."/>
            <person name="Ishii K."/>
            <person name="Yokoyama K."/>
            <person name="Han C.-G."/>
            <person name="Ohtsubo E."/>
            <person name="Nakayama K."/>
            <person name="Murata T."/>
            <person name="Tanaka M."/>
            <person name="Tobe T."/>
            <person name="Iida T."/>
            <person name="Takami H."/>
            <person name="Honda T."/>
            <person name="Sasakawa C."/>
            <person name="Ogasawara N."/>
            <person name="Yasunaga T."/>
            <person name="Kuhara S."/>
            <person name="Shiba T."/>
            <person name="Hattori M."/>
            <person name="Shinagawa H."/>
        </authorList>
    </citation>
    <scope>NUCLEOTIDE SEQUENCE [LARGE SCALE GENOMIC DNA]</scope>
    <source>
        <strain>O157:H7 / Sakai / RIMD 0509952 / EHEC</strain>
    </source>
</reference>
<comment type="function">
    <text evidence="1">Dual-function protein that regulates the transcription of class 2 flagellar operons and that also acts as an export chaperone for the filament-capping protein FliD. As a transcriptional regulator, acts as an anti-FlhDC factor; it directly binds FlhC, thus inhibiting the binding of the FlhC/FlhD complex to class 2 promoters, resulting in decreased expression of class 2 flagellar operons. As a chaperone, effects FliD transition to the membrane by preventing its premature polymerization, and by directing it to the export apparatus.</text>
</comment>
<comment type="subunit">
    <text evidence="1">Homodimer. Interacts with FliD and FlhC.</text>
</comment>
<comment type="subcellular location">
    <subcellularLocation>
        <location evidence="1">Cytoplasm</location>
        <location evidence="1">Cytosol</location>
    </subcellularLocation>
</comment>
<comment type="similarity">
    <text evidence="1">Belongs to the FliT family.</text>
</comment>
<name>FLIT_ECO57</name>
<protein>
    <recommendedName>
        <fullName evidence="1">Flagellar protein FliT</fullName>
    </recommendedName>
</protein>
<keyword id="KW-1005">Bacterial flagellum biogenesis</keyword>
<keyword id="KW-0143">Chaperone</keyword>
<keyword id="KW-0963">Cytoplasm</keyword>
<keyword id="KW-1185">Reference proteome</keyword>
<keyword id="KW-0678">Repressor</keyword>
<keyword id="KW-0804">Transcription</keyword>
<keyword id="KW-0805">Transcription regulation</keyword>
<accession>P0ABY3</accession>
<accession>P26610</accession>
<evidence type="ECO:0000255" key="1">
    <source>
        <dbReference type="HAMAP-Rule" id="MF_01180"/>
    </source>
</evidence>
<sequence>MNHAPHLYFAWQQLVEKSQLMLRLATEEQWDELIASEMAYVNAVQEIAHLTEEVDPSTTMQEQLRPMLRLILDNESKVKQLLQIRMDELAKLVGQSSVQKSVLSAYGDQGGFVLAPQDNLF</sequence>
<feature type="chain" id="PRO_0000180975" description="Flagellar protein FliT">
    <location>
        <begin position="1"/>
        <end position="121"/>
    </location>
</feature>
<feature type="region of interest" description="Required for homodimerization" evidence="1">
    <location>
        <begin position="1"/>
        <end position="50"/>
    </location>
</feature>
<feature type="region of interest" description="FliD binding" evidence="1">
    <location>
        <begin position="60"/>
        <end position="98"/>
    </location>
</feature>
<proteinExistence type="inferred from homology"/>